<organism>
    <name type="scientific">Mus musculus</name>
    <name type="common">Mouse</name>
    <dbReference type="NCBI Taxonomy" id="10090"/>
    <lineage>
        <taxon>Eukaryota</taxon>
        <taxon>Metazoa</taxon>
        <taxon>Chordata</taxon>
        <taxon>Craniata</taxon>
        <taxon>Vertebrata</taxon>
        <taxon>Euteleostomi</taxon>
        <taxon>Mammalia</taxon>
        <taxon>Eutheria</taxon>
        <taxon>Euarchontoglires</taxon>
        <taxon>Glires</taxon>
        <taxon>Rodentia</taxon>
        <taxon>Myomorpha</taxon>
        <taxon>Muroidea</taxon>
        <taxon>Muridae</taxon>
        <taxon>Murinae</taxon>
        <taxon>Mus</taxon>
        <taxon>Mus</taxon>
    </lineage>
</organism>
<name>BRCA1_MOUSE</name>
<accession>P48754</accession>
<accession>A2A4Q4</accession>
<accession>Q60957</accession>
<accession>Q60983</accession>
<dbReference type="EC" id="2.3.2.27" evidence="2"/>
<dbReference type="EMBL" id="U31625">
    <property type="protein sequence ID" value="AAB17114.1"/>
    <property type="molecule type" value="mRNA"/>
</dbReference>
<dbReference type="EMBL" id="U35641">
    <property type="protein sequence ID" value="AAB17113.1"/>
    <property type="molecule type" value="mRNA"/>
</dbReference>
<dbReference type="EMBL" id="U32446">
    <property type="protein sequence ID" value="AAA96393.1"/>
    <property type="molecule type" value="mRNA"/>
</dbReference>
<dbReference type="EMBL" id="U36475">
    <property type="protein sequence ID" value="AAC52323.1"/>
    <property type="molecule type" value="mRNA"/>
</dbReference>
<dbReference type="EMBL" id="AL590996">
    <property type="status" value="NOT_ANNOTATED_CDS"/>
    <property type="molecule type" value="Genomic_DNA"/>
</dbReference>
<dbReference type="EMBL" id="U33835">
    <property type="protein sequence ID" value="AAA99742.1"/>
    <property type="molecule type" value="Genomic_DNA"/>
</dbReference>
<dbReference type="CCDS" id="CCDS25474.1"/>
<dbReference type="PIR" id="I49350">
    <property type="entry name" value="I49350"/>
</dbReference>
<dbReference type="RefSeq" id="NP_033894.3">
    <property type="nucleotide sequence ID" value="NM_009764.3"/>
</dbReference>
<dbReference type="RefSeq" id="XP_030101355.1">
    <property type="nucleotide sequence ID" value="XM_030245495.2"/>
</dbReference>
<dbReference type="PDB" id="7K3S">
    <property type="method" value="NMR"/>
    <property type="chains" value="A=1337-1388"/>
</dbReference>
<dbReference type="PDBsum" id="7K3S"/>
<dbReference type="SMR" id="P48754"/>
<dbReference type="BioGRID" id="198383">
    <property type="interactions" value="47"/>
</dbReference>
<dbReference type="ComplexPortal" id="CPX-4701">
    <property type="entry name" value="BRCA1-BARD1 complex"/>
</dbReference>
<dbReference type="ComplexPortal" id="CPX-972">
    <property type="entry name" value="BRCC ubiquitin ligase complex"/>
</dbReference>
<dbReference type="DIP" id="DIP-41981N"/>
<dbReference type="FunCoup" id="P48754">
    <property type="interactions" value="1924"/>
</dbReference>
<dbReference type="IntAct" id="P48754">
    <property type="interactions" value="21"/>
</dbReference>
<dbReference type="MINT" id="P48754"/>
<dbReference type="STRING" id="10090.ENSMUSP00000017290"/>
<dbReference type="GlyGen" id="P48754">
    <property type="glycosylation" value="1 site"/>
</dbReference>
<dbReference type="iPTMnet" id="P48754"/>
<dbReference type="PhosphoSitePlus" id="P48754"/>
<dbReference type="jPOST" id="P48754"/>
<dbReference type="PaxDb" id="10090-ENSMUSP00000017290"/>
<dbReference type="PeptideAtlas" id="P48754"/>
<dbReference type="ProteomicsDB" id="273840"/>
<dbReference type="Pumba" id="P48754"/>
<dbReference type="Antibodypedia" id="4527">
    <property type="antibodies" value="2266 antibodies from 46 providers"/>
</dbReference>
<dbReference type="DNASU" id="12189"/>
<dbReference type="Ensembl" id="ENSMUST00000017290.11">
    <property type="protein sequence ID" value="ENSMUSP00000017290.5"/>
    <property type="gene ID" value="ENSMUSG00000017146.13"/>
</dbReference>
<dbReference type="GeneID" id="12189"/>
<dbReference type="KEGG" id="mmu:12189"/>
<dbReference type="UCSC" id="uc007lpd.2">
    <property type="organism name" value="mouse"/>
</dbReference>
<dbReference type="AGR" id="MGI:104537"/>
<dbReference type="CTD" id="672"/>
<dbReference type="MGI" id="MGI:104537">
    <property type="gene designation" value="Brca1"/>
</dbReference>
<dbReference type="VEuPathDB" id="HostDB:ENSMUSG00000017146"/>
<dbReference type="eggNOG" id="KOG4362">
    <property type="taxonomic scope" value="Eukaryota"/>
</dbReference>
<dbReference type="GeneTree" id="ENSGT00440000034289"/>
<dbReference type="HOGENOM" id="CLU_002290_0_0_1"/>
<dbReference type="InParanoid" id="P48754"/>
<dbReference type="OMA" id="ATCQQSP"/>
<dbReference type="OrthoDB" id="6105938at2759"/>
<dbReference type="PhylomeDB" id="P48754"/>
<dbReference type="TreeFam" id="TF105060"/>
<dbReference type="Reactome" id="R-MMU-3108214">
    <property type="pathway name" value="SUMOylation of DNA damage response and repair proteins"/>
</dbReference>
<dbReference type="Reactome" id="R-MMU-5685938">
    <property type="pathway name" value="HDR through Single Strand Annealing (SSA)"/>
</dbReference>
<dbReference type="Reactome" id="R-MMU-5685942">
    <property type="pathway name" value="HDR through Homologous Recombination (HRR)"/>
</dbReference>
<dbReference type="Reactome" id="R-MMU-5689901">
    <property type="pathway name" value="Metalloprotease DUBs"/>
</dbReference>
<dbReference type="Reactome" id="R-MMU-5693565">
    <property type="pathway name" value="Recruitment and ATM-mediated phosphorylation of repair and signaling proteins at DNA double strand breaks"/>
</dbReference>
<dbReference type="Reactome" id="R-MMU-5693568">
    <property type="pathway name" value="Resolution of D-loop Structures through Holliday Junction Intermediates"/>
</dbReference>
<dbReference type="Reactome" id="R-MMU-5693571">
    <property type="pathway name" value="Nonhomologous End-Joining (NHEJ)"/>
</dbReference>
<dbReference type="Reactome" id="R-MMU-5693579">
    <property type="pathway name" value="Homologous DNA Pairing and Strand Exchange"/>
</dbReference>
<dbReference type="Reactome" id="R-MMU-5693607">
    <property type="pathway name" value="Processing of DNA double-strand break ends"/>
</dbReference>
<dbReference type="Reactome" id="R-MMU-5693616">
    <property type="pathway name" value="Presynaptic phase of homologous DNA pairing and strand exchange"/>
</dbReference>
<dbReference type="Reactome" id="R-MMU-6804756">
    <property type="pathway name" value="Regulation of TP53 Activity through Phosphorylation"/>
</dbReference>
<dbReference type="Reactome" id="R-MMU-69473">
    <property type="pathway name" value="G2/M DNA damage checkpoint"/>
</dbReference>
<dbReference type="UniPathway" id="UPA00143"/>
<dbReference type="BioGRID-ORCS" id="12189">
    <property type="hits" value="27 hits in 122 CRISPR screens"/>
</dbReference>
<dbReference type="ChiTaRS" id="Brca1">
    <property type="organism name" value="mouse"/>
</dbReference>
<dbReference type="PRO" id="PR:P48754"/>
<dbReference type="Proteomes" id="UP000000589">
    <property type="component" value="Chromosome 11"/>
</dbReference>
<dbReference type="RNAct" id="P48754">
    <property type="molecule type" value="protein"/>
</dbReference>
<dbReference type="Bgee" id="ENSMUSG00000017146">
    <property type="expression patterns" value="Expressed in secondary oocyte and 233 other cell types or tissues"/>
</dbReference>
<dbReference type="ExpressionAtlas" id="P48754">
    <property type="expression patterns" value="baseline and differential"/>
</dbReference>
<dbReference type="GO" id="GO:0070531">
    <property type="term" value="C:BRCA1-A complex"/>
    <property type="evidence" value="ECO:0000303"/>
    <property type="project" value="ComplexPortal"/>
</dbReference>
<dbReference type="GO" id="GO:0070532">
    <property type="term" value="C:BRCA1-B complex"/>
    <property type="evidence" value="ECO:0000266"/>
    <property type="project" value="ComplexPortal"/>
</dbReference>
<dbReference type="GO" id="GO:0031436">
    <property type="term" value="C:BRCA1-BARD1 complex"/>
    <property type="evidence" value="ECO:0000250"/>
    <property type="project" value="UniProtKB"/>
</dbReference>
<dbReference type="GO" id="GO:0070533">
    <property type="term" value="C:BRCA1-C complex"/>
    <property type="evidence" value="ECO:0000266"/>
    <property type="project" value="ComplexPortal"/>
</dbReference>
<dbReference type="GO" id="GO:0005813">
    <property type="term" value="C:centrosome"/>
    <property type="evidence" value="ECO:0000304"/>
    <property type="project" value="UniProtKB"/>
</dbReference>
<dbReference type="GO" id="GO:0005694">
    <property type="term" value="C:chromosome"/>
    <property type="evidence" value="ECO:0000314"/>
    <property type="project" value="UniProtKB"/>
</dbReference>
<dbReference type="GO" id="GO:0000793">
    <property type="term" value="C:condensed chromosome"/>
    <property type="evidence" value="ECO:0000314"/>
    <property type="project" value="MGI"/>
</dbReference>
<dbReference type="GO" id="GO:0000794">
    <property type="term" value="C:condensed nuclear chromosome"/>
    <property type="evidence" value="ECO:0000314"/>
    <property type="project" value="MGI"/>
</dbReference>
<dbReference type="GO" id="GO:0005737">
    <property type="term" value="C:cytoplasm"/>
    <property type="evidence" value="ECO:0000314"/>
    <property type="project" value="MGI"/>
</dbReference>
<dbReference type="GO" id="GO:1990391">
    <property type="term" value="C:DNA repair complex"/>
    <property type="evidence" value="ECO:0007669"/>
    <property type="project" value="Ensembl"/>
</dbReference>
<dbReference type="GO" id="GO:0000800">
    <property type="term" value="C:lateral element"/>
    <property type="evidence" value="ECO:0000266"/>
    <property type="project" value="MGI"/>
</dbReference>
<dbReference type="GO" id="GO:0001673">
    <property type="term" value="C:male germ cell nucleus"/>
    <property type="evidence" value="ECO:0000314"/>
    <property type="project" value="MGI"/>
</dbReference>
<dbReference type="GO" id="GO:0016604">
    <property type="term" value="C:nuclear body"/>
    <property type="evidence" value="ECO:0007669"/>
    <property type="project" value="Ensembl"/>
</dbReference>
<dbReference type="GO" id="GO:0000152">
    <property type="term" value="C:nuclear ubiquitin ligase complex"/>
    <property type="evidence" value="ECO:0000266"/>
    <property type="project" value="ComplexPortal"/>
</dbReference>
<dbReference type="GO" id="GO:0005654">
    <property type="term" value="C:nucleoplasm"/>
    <property type="evidence" value="ECO:0000304"/>
    <property type="project" value="Reactome"/>
</dbReference>
<dbReference type="GO" id="GO:0005634">
    <property type="term" value="C:nucleus"/>
    <property type="evidence" value="ECO:0000266"/>
    <property type="project" value="ComplexPortal"/>
</dbReference>
<dbReference type="GO" id="GO:0005886">
    <property type="term" value="C:plasma membrane"/>
    <property type="evidence" value="ECO:0007669"/>
    <property type="project" value="Ensembl"/>
</dbReference>
<dbReference type="GO" id="GO:0032991">
    <property type="term" value="C:protein-containing complex"/>
    <property type="evidence" value="ECO:0000266"/>
    <property type="project" value="MGI"/>
</dbReference>
<dbReference type="GO" id="GO:1990904">
    <property type="term" value="C:ribonucleoprotein complex"/>
    <property type="evidence" value="ECO:0000266"/>
    <property type="project" value="MGI"/>
</dbReference>
<dbReference type="GO" id="GO:0001741">
    <property type="term" value="C:XY body"/>
    <property type="evidence" value="ECO:0000314"/>
    <property type="project" value="MGI"/>
</dbReference>
<dbReference type="GO" id="GO:0003684">
    <property type="term" value="F:damaged DNA binding"/>
    <property type="evidence" value="ECO:0000314"/>
    <property type="project" value="MGI"/>
</dbReference>
<dbReference type="GO" id="GO:0042802">
    <property type="term" value="F:identical protein binding"/>
    <property type="evidence" value="ECO:0007669"/>
    <property type="project" value="Ensembl"/>
</dbReference>
<dbReference type="GO" id="GO:0002039">
    <property type="term" value="F:p53 binding"/>
    <property type="evidence" value="ECO:0007669"/>
    <property type="project" value="Ensembl"/>
</dbReference>
<dbReference type="GO" id="GO:0003723">
    <property type="term" value="F:RNA binding"/>
    <property type="evidence" value="ECO:0000266"/>
    <property type="project" value="MGI"/>
</dbReference>
<dbReference type="GO" id="GO:0070063">
    <property type="term" value="F:RNA polymerase binding"/>
    <property type="evidence" value="ECO:0000250"/>
    <property type="project" value="UniProtKB"/>
</dbReference>
<dbReference type="GO" id="GO:0000976">
    <property type="term" value="F:transcription cis-regulatory region binding"/>
    <property type="evidence" value="ECO:0000314"/>
    <property type="project" value="BHF-UCL"/>
</dbReference>
<dbReference type="GO" id="GO:0003713">
    <property type="term" value="F:transcription coactivator activity"/>
    <property type="evidence" value="ECO:0000314"/>
    <property type="project" value="BHF-UCL"/>
</dbReference>
<dbReference type="GO" id="GO:0031625">
    <property type="term" value="F:ubiquitin protein ligase binding"/>
    <property type="evidence" value="ECO:0007669"/>
    <property type="project" value="Ensembl"/>
</dbReference>
<dbReference type="GO" id="GO:0004842">
    <property type="term" value="F:ubiquitin-protein transferase activity"/>
    <property type="evidence" value="ECO:0000250"/>
    <property type="project" value="UniProtKB"/>
</dbReference>
<dbReference type="GO" id="GO:0008270">
    <property type="term" value="F:zinc ion binding"/>
    <property type="evidence" value="ECO:0007669"/>
    <property type="project" value="UniProtKB-KW"/>
</dbReference>
<dbReference type="GO" id="GO:0071681">
    <property type="term" value="P:cellular response to indole-3-methanol"/>
    <property type="evidence" value="ECO:0007669"/>
    <property type="project" value="Ensembl"/>
</dbReference>
<dbReference type="GO" id="GO:0071479">
    <property type="term" value="P:cellular response to ionizing radiation"/>
    <property type="evidence" value="ECO:0000266"/>
    <property type="project" value="ComplexPortal"/>
</dbReference>
<dbReference type="GO" id="GO:0071356">
    <property type="term" value="P:cellular response to tumor necrosis factor"/>
    <property type="evidence" value="ECO:0007669"/>
    <property type="project" value="Ensembl"/>
</dbReference>
<dbReference type="GO" id="GO:0007098">
    <property type="term" value="P:centrosome cycle"/>
    <property type="evidence" value="ECO:0000316"/>
    <property type="project" value="MGI"/>
</dbReference>
<dbReference type="GO" id="GO:0051298">
    <property type="term" value="P:centrosome duplication"/>
    <property type="evidence" value="ECO:0000304"/>
    <property type="project" value="UniProtKB"/>
</dbReference>
<dbReference type="GO" id="GO:0043009">
    <property type="term" value="P:chordate embryonic development"/>
    <property type="evidence" value="ECO:0000315"/>
    <property type="project" value="MGI"/>
</dbReference>
<dbReference type="GO" id="GO:0007059">
    <property type="term" value="P:chromosome segregation"/>
    <property type="evidence" value="ECO:0007669"/>
    <property type="project" value="Ensembl"/>
</dbReference>
<dbReference type="GO" id="GO:0006974">
    <property type="term" value="P:DNA damage response"/>
    <property type="evidence" value="ECO:0000315"/>
    <property type="project" value="MGI"/>
</dbReference>
<dbReference type="GO" id="GO:0006281">
    <property type="term" value="P:DNA repair"/>
    <property type="evidence" value="ECO:0000303"/>
    <property type="project" value="ComplexPortal"/>
</dbReference>
<dbReference type="GO" id="GO:0110025">
    <property type="term" value="P:DNA strand resection involved in replication fork processing"/>
    <property type="evidence" value="ECO:0000303"/>
    <property type="project" value="ComplexPortal"/>
</dbReference>
<dbReference type="GO" id="GO:0006302">
    <property type="term" value="P:double-strand break repair"/>
    <property type="evidence" value="ECO:0000315"/>
    <property type="project" value="CACAO"/>
</dbReference>
<dbReference type="GO" id="GO:0000724">
    <property type="term" value="P:double-strand break repair via homologous recombination"/>
    <property type="evidence" value="ECO:0007669"/>
    <property type="project" value="Ensembl"/>
</dbReference>
<dbReference type="GO" id="GO:0006633">
    <property type="term" value="P:fatty acid biosynthetic process"/>
    <property type="evidence" value="ECO:0007669"/>
    <property type="project" value="UniProtKB-KW"/>
</dbReference>
<dbReference type="GO" id="GO:0035825">
    <property type="term" value="P:homologous recombination"/>
    <property type="evidence" value="ECO:0000303"/>
    <property type="project" value="ComplexPortal"/>
</dbReference>
<dbReference type="GO" id="GO:0008630">
    <property type="term" value="P:intrinsic apoptotic signaling pathway in response to DNA damage"/>
    <property type="evidence" value="ECO:0000266"/>
    <property type="project" value="MGI"/>
</dbReference>
<dbReference type="GO" id="GO:0007095">
    <property type="term" value="P:mitotic G2 DNA damage checkpoint signaling"/>
    <property type="evidence" value="ECO:0007669"/>
    <property type="project" value="Ensembl"/>
</dbReference>
<dbReference type="GO" id="GO:0044818">
    <property type="term" value="P:mitotic G2/M transition checkpoint"/>
    <property type="evidence" value="ECO:0000315"/>
    <property type="project" value="MGI"/>
</dbReference>
<dbReference type="GO" id="GO:0030308">
    <property type="term" value="P:negative regulation of cell growth"/>
    <property type="evidence" value="ECO:0007669"/>
    <property type="project" value="Ensembl"/>
</dbReference>
<dbReference type="GO" id="GO:0045892">
    <property type="term" value="P:negative regulation of DNA-templated transcription"/>
    <property type="evidence" value="ECO:0007669"/>
    <property type="project" value="Ensembl"/>
</dbReference>
<dbReference type="GO" id="GO:1902042">
    <property type="term" value="P:negative regulation of extrinsic apoptotic signaling pathway via death domain receptors"/>
    <property type="evidence" value="ECO:0007669"/>
    <property type="project" value="Ensembl"/>
</dbReference>
<dbReference type="GO" id="GO:0045717">
    <property type="term" value="P:negative regulation of fatty acid biosynthetic process"/>
    <property type="evidence" value="ECO:0000250"/>
    <property type="project" value="UniProtKB"/>
</dbReference>
<dbReference type="GO" id="GO:0044027">
    <property type="term" value="P:negative regulation of gene expression via chromosomal CpG island methylation"/>
    <property type="evidence" value="ECO:0000314"/>
    <property type="project" value="BHF-UCL"/>
</dbReference>
<dbReference type="GO" id="GO:0033147">
    <property type="term" value="P:negative regulation of intracellular estrogen receptor signaling pathway"/>
    <property type="evidence" value="ECO:0007669"/>
    <property type="project" value="Ensembl"/>
</dbReference>
<dbReference type="GO" id="GO:2000378">
    <property type="term" value="P:negative regulation of reactive oxygen species metabolic process"/>
    <property type="evidence" value="ECO:0007669"/>
    <property type="project" value="Ensembl"/>
</dbReference>
<dbReference type="GO" id="GO:0045766">
    <property type="term" value="P:positive regulation of angiogenesis"/>
    <property type="evidence" value="ECO:0007669"/>
    <property type="project" value="Ensembl"/>
</dbReference>
<dbReference type="GO" id="GO:0045787">
    <property type="term" value="P:positive regulation of cell cycle"/>
    <property type="evidence" value="ECO:0000303"/>
    <property type="project" value="ComplexPortal"/>
</dbReference>
<dbReference type="GO" id="GO:0045739">
    <property type="term" value="P:positive regulation of DNA repair"/>
    <property type="evidence" value="ECO:0007669"/>
    <property type="project" value="Ensembl"/>
</dbReference>
<dbReference type="GO" id="GO:0045893">
    <property type="term" value="P:positive regulation of DNA-templated transcription"/>
    <property type="evidence" value="ECO:0000250"/>
    <property type="project" value="UniProtKB"/>
</dbReference>
<dbReference type="GO" id="GO:0045944">
    <property type="term" value="P:positive regulation of transcription by RNA polymerase II"/>
    <property type="evidence" value="ECO:0000315"/>
    <property type="project" value="BHF-UCL"/>
</dbReference>
<dbReference type="GO" id="GO:0010575">
    <property type="term" value="P:positive regulation of vascular endothelial growth factor production"/>
    <property type="evidence" value="ECO:0007669"/>
    <property type="project" value="Ensembl"/>
</dbReference>
<dbReference type="GO" id="GO:0006301">
    <property type="term" value="P:postreplication repair"/>
    <property type="evidence" value="ECO:0007669"/>
    <property type="project" value="Ensembl"/>
</dbReference>
<dbReference type="GO" id="GO:0051865">
    <property type="term" value="P:protein autoubiquitination"/>
    <property type="evidence" value="ECO:0000250"/>
    <property type="project" value="UniProtKB"/>
</dbReference>
<dbReference type="GO" id="GO:0085020">
    <property type="term" value="P:protein K6-linked ubiquitination"/>
    <property type="evidence" value="ECO:0000250"/>
    <property type="project" value="UniProtKB"/>
</dbReference>
<dbReference type="GO" id="GO:0060816">
    <property type="term" value="P:random inactivation of X chromosome"/>
    <property type="evidence" value="ECO:0000316"/>
    <property type="project" value="MGI"/>
</dbReference>
<dbReference type="GO" id="GO:2000001">
    <property type="term" value="P:regulation of DNA damage checkpoint"/>
    <property type="evidence" value="ECO:0000303"/>
    <property type="project" value="ComplexPortal"/>
</dbReference>
<dbReference type="GO" id="GO:0006282">
    <property type="term" value="P:regulation of DNA repair"/>
    <property type="evidence" value="ECO:0000303"/>
    <property type="project" value="ComplexPortal"/>
</dbReference>
<dbReference type="GO" id="GO:0006357">
    <property type="term" value="P:regulation of transcription by RNA polymerase II"/>
    <property type="evidence" value="ECO:0000250"/>
    <property type="project" value="UniProtKB"/>
</dbReference>
<dbReference type="CDD" id="cd17735">
    <property type="entry name" value="BRCT_BRCA1_rpt1"/>
    <property type="match status" value="1"/>
</dbReference>
<dbReference type="CDD" id="cd17721">
    <property type="entry name" value="BRCT_BRCA1_rpt2"/>
    <property type="match status" value="1"/>
</dbReference>
<dbReference type="CDD" id="cd16498">
    <property type="entry name" value="RING-HC_BRCA1"/>
    <property type="match status" value="1"/>
</dbReference>
<dbReference type="FunFam" id="3.30.40.10:FF:000213">
    <property type="entry name" value="Breast cancer type 1 susceptibility protein homolog"/>
    <property type="match status" value="1"/>
</dbReference>
<dbReference type="FunFam" id="3.40.50.10190:FF:000006">
    <property type="entry name" value="Breast cancer type 1 susceptibility protein homolog"/>
    <property type="match status" value="1"/>
</dbReference>
<dbReference type="FunFam" id="3.40.50.10190:FF:000025">
    <property type="entry name" value="Breast cancer type 1 susceptibility protein homolog"/>
    <property type="match status" value="1"/>
</dbReference>
<dbReference type="Gene3D" id="3.40.50.10190">
    <property type="entry name" value="BRCT domain"/>
    <property type="match status" value="2"/>
</dbReference>
<dbReference type="Gene3D" id="3.30.40.10">
    <property type="entry name" value="Zinc/RING finger domain, C3HC4 (zinc finger)"/>
    <property type="match status" value="1"/>
</dbReference>
<dbReference type="InterPro" id="IPR011364">
    <property type="entry name" value="BRCA1"/>
</dbReference>
<dbReference type="InterPro" id="IPR031099">
    <property type="entry name" value="BRCA1-associated"/>
</dbReference>
<dbReference type="InterPro" id="IPR025994">
    <property type="entry name" value="BRCA1_serine_dom"/>
</dbReference>
<dbReference type="InterPro" id="IPR001357">
    <property type="entry name" value="BRCT_dom"/>
</dbReference>
<dbReference type="InterPro" id="IPR036420">
    <property type="entry name" value="BRCT_dom_sf"/>
</dbReference>
<dbReference type="InterPro" id="IPR018957">
    <property type="entry name" value="Znf_C3HC4_RING-type"/>
</dbReference>
<dbReference type="InterPro" id="IPR001841">
    <property type="entry name" value="Znf_RING"/>
</dbReference>
<dbReference type="InterPro" id="IPR013083">
    <property type="entry name" value="Znf_RING/FYVE/PHD"/>
</dbReference>
<dbReference type="InterPro" id="IPR017907">
    <property type="entry name" value="Znf_RING_CS"/>
</dbReference>
<dbReference type="PANTHER" id="PTHR13763:SF0">
    <property type="entry name" value="BREAST CANCER TYPE 1 SUSCEPTIBILITY PROTEIN"/>
    <property type="match status" value="1"/>
</dbReference>
<dbReference type="PANTHER" id="PTHR13763">
    <property type="entry name" value="BREAST CANCER TYPE 1 SUSCEPTIBILITY PROTEIN BRCA1"/>
    <property type="match status" value="1"/>
</dbReference>
<dbReference type="Pfam" id="PF00533">
    <property type="entry name" value="BRCT"/>
    <property type="match status" value="2"/>
</dbReference>
<dbReference type="Pfam" id="PF12820">
    <property type="entry name" value="BRCT_assoc"/>
    <property type="match status" value="1"/>
</dbReference>
<dbReference type="Pfam" id="PF00097">
    <property type="entry name" value="zf-C3HC4"/>
    <property type="match status" value="1"/>
</dbReference>
<dbReference type="PIRSF" id="PIRSF001734">
    <property type="entry name" value="BRCA1"/>
    <property type="match status" value="1"/>
</dbReference>
<dbReference type="PRINTS" id="PR00493">
    <property type="entry name" value="BRSTCANCERI"/>
</dbReference>
<dbReference type="SMART" id="SM00292">
    <property type="entry name" value="BRCT"/>
    <property type="match status" value="2"/>
</dbReference>
<dbReference type="SMART" id="SM00184">
    <property type="entry name" value="RING"/>
    <property type="match status" value="1"/>
</dbReference>
<dbReference type="SUPFAM" id="SSF52113">
    <property type="entry name" value="BRCT domain"/>
    <property type="match status" value="2"/>
</dbReference>
<dbReference type="SUPFAM" id="SSF57850">
    <property type="entry name" value="RING/U-box"/>
    <property type="match status" value="1"/>
</dbReference>
<dbReference type="PROSITE" id="PS50172">
    <property type="entry name" value="BRCT"/>
    <property type="match status" value="2"/>
</dbReference>
<dbReference type="PROSITE" id="PS00518">
    <property type="entry name" value="ZF_RING_1"/>
    <property type="match status" value="1"/>
</dbReference>
<dbReference type="PROSITE" id="PS50089">
    <property type="entry name" value="ZF_RING_2"/>
    <property type="match status" value="1"/>
</dbReference>
<comment type="function">
    <text evidence="2">E3 ubiquitin-protein ligase that specifically mediates the formation of 'Lys-6'-linked polyubiquitin chains and plays a central role in DNA repair by facilitating cellular responses to DNA damage. It is unclear whether it also mediates the formation of other types of polyubiquitin chains. The BRCA1-BARD1 heterodimer coordinates a diverse range of cellular pathways such as DNA damage repair, ubiquitination and transcriptional regulation to maintain genomic stability. Regulates centrosomal microtubule nucleation. Required for appropriate cell cycle arrests after ionizing irradiation in both the S-phase and the G2 phase of the cell cycle. Required for FANCD2 targeting to sites of DNA damage. Inhibits lipid synthesis by binding to inactive phosphorylated ACACA and preventing its dephosphorylation. Contributes to homologous recombination repair (HRR) via its direct interaction with PALB2, fine-tunes recombinational repair partly through its modulatory role in the PALB2-dependent loading of BRCA2-RAD51 repair machinery at DNA breaks. Component of the BRCA1-RBBP8 complex which regulates CHEK1 activation and controls cell cycle G2/M checkpoints on DNA damage via BRCA1-mediated ubiquitination of RBBP8. Acts as a transcriptional activator.</text>
</comment>
<comment type="catalytic activity">
    <reaction evidence="2">
        <text>S-ubiquitinyl-[E2 ubiquitin-conjugating enzyme]-L-cysteine + [acceptor protein]-L-lysine = [E2 ubiquitin-conjugating enzyme]-L-cysteine + N(6)-ubiquitinyl-[acceptor protein]-L-lysine.</text>
        <dbReference type="EC" id="2.3.2.27"/>
    </reaction>
</comment>
<comment type="pathway">
    <text>Protein modification; protein ubiquitination.</text>
</comment>
<comment type="subunit">
    <text evidence="2 6">Heterodimer with BARD1. Part of the BRCA1-associated genome surveillance complex (BASC), which contains BRCA1, MSH2, MSH6, MLH1, ATM, BLM, PMS2 and the MRE11-RAD50-NBN protein (MRN) complex. This association could be a dynamic process changing throughout the cell cycle and within subnuclear domains. Component of the BRCA1-A complex, at least composed of BRCA1, BARD1, UIMC1/RAP80, ABRAXAS1, BRCC3/BRCC36, BABAM2 and BABAM1/NBA1. Interacts (via the BRCT domains) with ABRAXAS1 (phosphorylated form); this is important for recruitment to sites of DNA damage. Can form a heterotetramer with two molecules of ABRAXAS1 (phosphorylated form). Component of the BRCA1-RBBP8 complex. Interacts (via the BRCT domains) with RBBP8 ('Ser-327' phosphorylated form); the interaction ubiquitinates RBBP8, regulates CHEK1 activation, and involves RBBP8 in BRCA1-dependent G2/M checkpoint control on DNA damage. Associates with RNA polymerase II holoenzyme. Interacts with SMC1A, NELFB, DCLRE1C, CLSPN. CHEK1, CHEK2, BAP1, BRCC3, UBXN1 and PCLAF. Interacts (via BRCT domains) with BRIP1 (phosphorylated form). Interacts with FANCD2 (ubiquitinated form). Interacts with H2AX (phosphorylated on 'Ser-140'). Interacts (via the BRCT domains) with ACACA (phosphorylated form); the interaction prevents dephosphorylation of ACACA. Part of a BRCA complex containing BRCA1, BRCA2 and PALB2. Interacts directly with PALB2; the interaction is essential for its function in HRR. Interacts directly with BRCA2; the interaction occurs only in the presence of PALB2 which serves as the bridging protein. Interacts (via the BRCT domains) with LMO4; the interaction represses the transcriptional activity of BRCA1. Interacts (via the BRCT domains) with CCAR2 (via N-terminus); the interaction represses the transcriptional activator activity of BRCA1 (By similarity). Interacts with EXD2 (By similarity). Interacts (via C-terminus) with DHX9; this interaction is direct and links BRCA1 to the RNA polymerase II holoenzyme (By similarity). Interacts with DNA helicase ZGRF1; the interaction is increased following DNA damage induction (By similarity).</text>
</comment>
<comment type="subcellular location">
    <subcellularLocation>
        <location evidence="2">Nucleus</location>
    </subcellularLocation>
    <subcellularLocation>
        <location evidence="7 8">Chromosome</location>
    </subcellularLocation>
    <subcellularLocation>
        <location evidence="2">Cytoplasm</location>
    </subcellularLocation>
    <text evidence="2">Localizes at sites of DNA damage at double-strand breaks (DSBs); recruitment to DNA damage sites is mediated by the BRCA1-A complex. Translocated to the cytoplasm during UV-induced apoptosis.</text>
</comment>
<comment type="tissue specificity">
    <text>In the embryo, expressed in otic vesicles at day 9.5. At day 10.5, this expression decreases and high levels are found in the neuroectoderm. At days 11-12.5, high levels in differentiating keratinocytes and whisker pad primordia. At days 14-17, expression also observed in kidney epithelial cells. In the adult, highest levels found in spleen, thymus, lymph nodes, epithelial organs, and alveolar and ductal epithelial cells of the mammary gland. Very low levels in brain, kidney, and skin. No expression in heart, liver or lung.</text>
</comment>
<comment type="developmental stage">
    <text>In the mammary gland, expression increases dramatically during pregnancy. Levels fall during lactation and increase again during post-lactational regression of the mammary gland.</text>
</comment>
<comment type="domain">
    <text evidence="2">The BRCT domains recognize and bind phosphorylated pSXXF motif on proteins. The interaction with the phosphorylated pSXXF motif of ABRAXAS1, recruits BRCA1 at DNA damage sites.</text>
</comment>
<comment type="domain">
    <text evidence="2">The RING-type zinc finger domain interacts with BAP1.</text>
</comment>
<comment type="PTM">
    <text evidence="2">Phosphorylated in response to IR, UV, and various stimuli that cause checkpoint activation, probably by ATM or ATR. Phosphorylation at Ser-971 by CHEK2 regulates mitotic spindle assembly. Phosphorylation by AURKA regulates centrosomal microtubule nucleation.</text>
</comment>
<comment type="PTM">
    <text evidence="2">Autoubiquitinated, undergoes 'Lys-6'-linked polyubiquitination. 'Lys-6'-linked polyubiquitination does not promote degradation.</text>
</comment>
<sequence>MDLSAVQIQEVQNVLHAMQKILECPICLELIKEPVSTKCDHIFCKFCMLKLLNQKKGPSQCPLCKNEITKRSLQGSTRFSQLAEELLRIMAAFELDTGMQLTNGFSFSKKRNNSCERLNEEASIIQSVGYRNRVRRLPQVEPGNATLKDSLGVQLSNLGIVRSVKKNRQTQPRKKSVYIELDSDSSEETVTKPGDCSVRDQELLQTAPQEAGDEGKLHSAEEAACEFSEGIRNIEHHQCSDDLNPTENHATERHPEKCQSISISNVCVEPCGTDAHASSLQPETSSLLLIEDRMNAEKAEFCNKSKQPGIAVSQQSRWAASKGTCNDRQVPSTGEKVGPNADSLSDREKWTHPQSLCPENSGATTDVPWITLNSSVQKVNEWFSRTGEMLTSDSASARRHESNAEAAVVLEVSNEVDGGFSSSRKTDLVTPDPHHTLMCKSGRDFSKPVEDNISDKIFGKSYQRKGSRPHLNHVTEIIGTFITEPQITQEQPFTNKLKRKRSTSLQPEDFIKKADSAGVQRTPDNINQGTDLMEPNEQAVSTTSNCQENKIAGSNLQKEKSAHPTESLRKEPASTAGAKSISNSVSDLEVELNVHSSKAPKKNRLRRKSSIRCALPLEPISRNPSPPTCAELQIDSCGSSEETKKNHSNQQPAGHLREPQLIEDTEPAADAKKNEPNEHIRKRRASDAFPEEKLMNKAGLLTSCSSPRKSQGPVNPSPQRTGTEQLETRQMSDSAKELGDRVLGGEPSGKTTDRSEESTSVSLVSDTDYDTQNSVSVLDAHTVRYARTGSAQCMTQFVASENPKELVHGSNNAGSGTEGLKPPLRHALNLSQEKVEMEDSELDTQYLQNTFQVSKRQSFALFSKPRSPQKDCAHSVPSKELSPKVTAKGKQKERQGQEEFEISHVQAVAATVGLPVPCQEGKLAADTMCDRGCRLCPSSHYRSGENGLSATGKSGISQNSHFKQSVSPIRSSIKTDNRKPLTEGRFERHTSSTEMAVGNENILQSTVHTVSLNNRGNACQEAGSGSIHEVCSTGDSFPGQLGRNRGPKVNTVPPLDSMQPGVCQQSVPVSDKYLEIKKQEGEAVCADFSPCLFSDHLEQSMSGKVFQVCSETPDDLLDDVEIQGHTSFGEGDIMERSAVFNGSILRRESSRSPSPVTHASKSQSLHRASRKLESSEESDSTEDEDLPCFQHLLSRISNTPELTRCSSAVTQRMPEKAEGTQAPWKGSSSDCNNEVIMIEASQEHQFSEDPRCSGSMFSSQHSAAQGSTANANSQDSNFIPPSKQRSHQCGNEEAFLSDKELISDNEEMATCLEEDNDQEEDSIIPDSEASGYESETNLSEDCSQSDILTTQQRATMKYNLIKLQQEMAHLEAVLEQRGNQPSGHSPSLLADPCALEDLPDLEPNMSGAAILTSKNINENPVSQNLKSACDDKFQLQHLEGPTSGDDESGMGRPSPFKSPLAGSRGSAHGCSRHLQKRNSPSQEELLQPAGSEASSEPHNSTGQSCLPRRELEGTPYLGSGISLFSSRDPESESPKEPAHIGTTPASTSALKIPQGQVAFRSAAAAGADKAVVGIVSKIKPELTSSEERADRDISMVVSGLTPKEVMTVQKFAEKYRLTLTDAITEETTHVIIKTDAEFVCERTLKYFLGIAGGKWIVSYSWVVRSIQERRLLNVHEFEVKGDVVTGRNHQGPRRSRESREKLFKGLQVYCCEPFTNMPKDELERMLQLCGASVVKELPSLTHDTGAHLVVIVQPSAWTEDSNCPDIGQLCKARLVMWDWVLDSLSSYRCRDLDAYLVQNITCDSSEPQDSND</sequence>
<evidence type="ECO:0000250" key="1"/>
<evidence type="ECO:0000250" key="2">
    <source>
        <dbReference type="UniProtKB" id="P38398"/>
    </source>
</evidence>
<evidence type="ECO:0000255" key="3">
    <source>
        <dbReference type="PROSITE-ProRule" id="PRU00033"/>
    </source>
</evidence>
<evidence type="ECO:0000255" key="4">
    <source>
        <dbReference type="PROSITE-ProRule" id="PRU00175"/>
    </source>
</evidence>
<evidence type="ECO:0000256" key="5">
    <source>
        <dbReference type="SAM" id="MobiDB-lite"/>
    </source>
</evidence>
<evidence type="ECO:0000269" key="6">
    <source>
    </source>
</evidence>
<evidence type="ECO:0000269" key="7">
    <source>
    </source>
</evidence>
<evidence type="ECO:0000269" key="8">
    <source>
    </source>
</evidence>
<evidence type="ECO:0000305" key="9"/>
<evidence type="ECO:0007744" key="10">
    <source>
    </source>
</evidence>
<evidence type="ECO:0007744" key="11">
    <source>
    </source>
</evidence>
<evidence type="ECO:0007829" key="12">
    <source>
        <dbReference type="PDB" id="7K3S"/>
    </source>
</evidence>
<protein>
    <recommendedName>
        <fullName>Breast cancer type 1 susceptibility protein homolog</fullName>
        <ecNumber evidence="2">2.3.2.27</ecNumber>
    </recommendedName>
    <alternativeName>
        <fullName evidence="9">RING-type E3 ubiquitin transferase BRCA1</fullName>
    </alternativeName>
</protein>
<proteinExistence type="evidence at protein level"/>
<keyword id="KW-0002">3D-structure</keyword>
<keyword id="KW-0007">Acetylation</keyword>
<keyword id="KW-0010">Activator</keyword>
<keyword id="KW-0131">Cell cycle</keyword>
<keyword id="KW-0158">Chromosome</keyword>
<keyword id="KW-0963">Cytoplasm</keyword>
<keyword id="KW-0227">DNA damage</keyword>
<keyword id="KW-0233">DNA recombination</keyword>
<keyword id="KW-0234">DNA repair</keyword>
<keyword id="KW-0238">DNA-binding</keyword>
<keyword id="KW-0275">Fatty acid biosynthesis</keyword>
<keyword id="KW-0276">Fatty acid metabolism</keyword>
<keyword id="KW-1017">Isopeptide bond</keyword>
<keyword id="KW-0444">Lipid biosynthesis</keyword>
<keyword id="KW-0443">Lipid metabolism</keyword>
<keyword id="KW-0479">Metal-binding</keyword>
<keyword id="KW-0539">Nucleus</keyword>
<keyword id="KW-0597">Phosphoprotein</keyword>
<keyword id="KW-1185">Reference proteome</keyword>
<keyword id="KW-0677">Repeat</keyword>
<keyword id="KW-0804">Transcription</keyword>
<keyword id="KW-0805">Transcription regulation</keyword>
<keyword id="KW-0808">Transferase</keyword>
<keyword id="KW-0043">Tumor suppressor</keyword>
<keyword id="KW-0832">Ubl conjugation</keyword>
<keyword id="KW-0833">Ubl conjugation pathway</keyword>
<keyword id="KW-0862">Zinc</keyword>
<keyword id="KW-0863">Zinc-finger</keyword>
<reference key="1">
    <citation type="journal article" date="1995" name="Hum. Mol. Genet.">
        <title>Mouse Brca1: localization sequence analysis and identification of evolutionarily conserved domains.</title>
        <authorList>
            <person name="Abel K.J."/>
            <person name="Xy J."/>
            <person name="Yin G.Y."/>
            <person name="Lyons R.H."/>
            <person name="Meisler M.H."/>
            <person name="Weber B.L."/>
        </authorList>
    </citation>
    <scope>NUCLEOTIDE SEQUENCE [MRNA]</scope>
    <source>
        <strain>C57BL/6J</strain>
        <tissue>Embryo</tissue>
    </source>
</reference>
<reference key="2">
    <citation type="journal article" date="1995" name="Hum. Mol. Genet.">
        <title>Murine Brca1: sequence and significance for human missense mutations.</title>
        <authorList>
            <person name="Sharan S.K."/>
            <person name="Wims M."/>
            <person name="Bradley A."/>
        </authorList>
    </citation>
    <scope>NUCLEOTIDE SEQUENCE [MRNA]</scope>
    <source>
        <strain>C57BL/6J</strain>
    </source>
</reference>
<reference key="3">
    <citation type="journal article" date="1995" name="Genomics">
        <title>Isolation of the mouse homologue of BRCA1 and genetic mapping to mouse chromosome 11.</title>
        <authorList>
            <person name="Bennett L.M."/>
            <person name="Haugen-Strano A."/>
            <person name="Cochran C."/>
            <person name="Brownlee H.A."/>
            <person name="Fiedorek F.T. Jr."/>
            <person name="Wiseman R.W."/>
        </authorList>
    </citation>
    <scope>NUCLEOTIDE SEQUENCE [MRNA]</scope>
    <source>
        <strain>129/SvJ</strain>
    </source>
</reference>
<reference key="4">
    <citation type="journal article" date="1995" name="Genes Dev.">
        <title>Expression of Brca1 is associated with terminal differentiation of ectodermally and mesodermally derived tissues in mice.</title>
        <authorList>
            <person name="Lane T.F."/>
            <person name="Deng C."/>
            <person name="Elson A."/>
            <person name="Lyu M.S."/>
            <person name="Kozak C.A."/>
            <person name="Leder P."/>
        </authorList>
    </citation>
    <scope>NUCLEOTIDE SEQUENCE [MRNA]</scope>
    <source>
        <strain>129/SvJ</strain>
        <tissue>Embryo</tissue>
    </source>
</reference>
<reference key="5">
    <citation type="journal article" date="2009" name="PLoS Biol.">
        <title>Lineage-specific biology revealed by a finished genome assembly of the mouse.</title>
        <authorList>
            <person name="Church D.M."/>
            <person name="Goodstadt L."/>
            <person name="Hillier L.W."/>
            <person name="Zody M.C."/>
            <person name="Goldstein S."/>
            <person name="She X."/>
            <person name="Bult C.J."/>
            <person name="Agarwala R."/>
            <person name="Cherry J.L."/>
            <person name="DiCuccio M."/>
            <person name="Hlavina W."/>
            <person name="Kapustin Y."/>
            <person name="Meric P."/>
            <person name="Maglott D."/>
            <person name="Birtle Z."/>
            <person name="Marques A.C."/>
            <person name="Graves T."/>
            <person name="Zhou S."/>
            <person name="Teague B."/>
            <person name="Potamousis K."/>
            <person name="Churas C."/>
            <person name="Place M."/>
            <person name="Herschleb J."/>
            <person name="Runnheim R."/>
            <person name="Forrest D."/>
            <person name="Amos-Landgraf J."/>
            <person name="Schwartz D.C."/>
            <person name="Cheng Z."/>
            <person name="Lindblad-Toh K."/>
            <person name="Eichler E.E."/>
            <person name="Ponting C.P."/>
        </authorList>
    </citation>
    <scope>NUCLEOTIDE SEQUENCE [LARGE SCALE GENOMIC DNA]</scope>
    <source>
        <strain>C57BL/6J</strain>
    </source>
</reference>
<reference key="6">
    <citation type="journal article" date="1995" name="Nat. Genet.">
        <title>The developmental pattern of Brca1 expression implies a role in differentiation of the breast and other tissues.</title>
        <authorList>
            <person name="Marquis S.T."/>
            <person name="Rajan J.V."/>
            <person name="Wynshaw-Boris A."/>
            <person name="Xu J."/>
            <person name="Yin G.Y."/>
            <person name="Abel K.J."/>
            <person name="Weber B.L."/>
            <person name="Chodosh L.A."/>
        </authorList>
    </citation>
    <scope>NUCLEOTIDE SEQUENCE [MRNA] OF 727-1111</scope>
    <source>
        <strain>C57BL/6J</strain>
        <tissue>Embryo</tissue>
    </source>
</reference>
<reference key="7">
    <citation type="journal article" date="1996" name="Hum. Genet.">
        <title>The murine homolog of the human breast and ovarian cancer susceptibility gene Brca1 maps to mouse chromosome 11D.</title>
        <authorList>
            <person name="Schroeck E."/>
            <person name="Badger P."/>
            <person name="Larson D."/>
            <person name="Erdos M."/>
            <person name="Wynshaw-Boris A."/>
            <person name="Ried T."/>
            <person name="Brody L."/>
        </authorList>
    </citation>
    <scope>NUCLEOTIDE SEQUENCE [GENOMIC DNA] OF 789-1250</scope>
    <source>
        <strain>129/SvJ</strain>
    </source>
</reference>
<reference key="8">
    <citation type="journal article" date="2002" name="Oncogene">
        <title>BRCA1 interacts with acetyl-CoA carboxylase through its tandem of BRCT domains.</title>
        <authorList>
            <person name="Magnard C."/>
            <person name="Bachelier R."/>
            <person name="Vincent A."/>
            <person name="Jaquinod M."/>
            <person name="Kieffer S."/>
            <person name="Lenoir G.M."/>
            <person name="Venezia N.D."/>
        </authorList>
    </citation>
    <scope>INTERACTION WITH ACACA</scope>
</reference>
<reference key="9">
    <citation type="journal article" date="2007" name="Science">
        <title>ATM and ATR substrate analysis reveals extensive protein networks responsive to DNA damage.</title>
        <authorList>
            <person name="Matsuoka S."/>
            <person name="Ballif B.A."/>
            <person name="Smogorzewska A."/>
            <person name="McDonald E.R. III"/>
            <person name="Hurov K.E."/>
            <person name="Luo J."/>
            <person name="Bakalarski C.E."/>
            <person name="Zhao Z."/>
            <person name="Solimini N."/>
            <person name="Lerenthal Y."/>
            <person name="Shiloh Y."/>
            <person name="Gygi S.P."/>
            <person name="Elledge S.J."/>
        </authorList>
    </citation>
    <scope>PHOSPHORYLATION [LARGE SCALE ANALYSIS] AT SER-831</scope>
    <scope>IDENTIFICATION BY MASS SPECTROMETRY [LARGE SCALE ANALYSIS]</scope>
    <source>
        <tissue>Embryonic fibroblast</tissue>
    </source>
</reference>
<reference key="10">
    <citation type="journal article" date="2010" name="Cell">
        <title>A tissue-specific atlas of mouse protein phosphorylation and expression.</title>
        <authorList>
            <person name="Huttlin E.L."/>
            <person name="Jedrychowski M.P."/>
            <person name="Elias J.E."/>
            <person name="Goswami T."/>
            <person name="Rad R."/>
            <person name="Beausoleil S.A."/>
            <person name="Villen J."/>
            <person name="Haas W."/>
            <person name="Sowa M.E."/>
            <person name="Gygi S.P."/>
        </authorList>
    </citation>
    <scope>PHOSPHORYLATION [LARGE SCALE ANALYSIS] AT SER-706 AND SER-717</scope>
    <scope>IDENTIFICATION BY MASS SPECTROMETRY [LARGE SCALE ANALYSIS]</scope>
    <source>
        <tissue>Lung</tissue>
        <tissue>Spleen</tissue>
        <tissue>Testis</tissue>
    </source>
</reference>
<reference key="11">
    <citation type="journal article" date="2012" name="Genes Cells">
        <title>HORMAD2 is essential for synapsis surveillance during meiotic prophase via the recruitment of ATR activity.</title>
        <authorList>
            <person name="Kogo H."/>
            <person name="Tsutsumi M."/>
            <person name="Inagaki H."/>
            <person name="Ohye T."/>
            <person name="Kiyonari H."/>
            <person name="Kurahashi H."/>
        </authorList>
    </citation>
    <scope>SUBCELLULAR LOCATION</scope>
</reference>
<reference key="12">
    <citation type="journal article" date="2012" name="Genes Dev.">
        <title>Meiotic DNA double-strand breaks and chromosome asynapsis in mice are monitored by distinct HORMAD2-independent and -dependent mechanisms.</title>
        <authorList>
            <person name="Wojtasz L."/>
            <person name="Cloutier J.M."/>
            <person name="Baumann M."/>
            <person name="Daniel K."/>
            <person name="Varga J."/>
            <person name="Fu J."/>
            <person name="Anastassiadis K."/>
            <person name="Stewart A.F."/>
            <person name="Remenyi A."/>
            <person name="Turner J.M."/>
            <person name="Toth A."/>
        </authorList>
    </citation>
    <scope>SUBCELLULAR LOCATION</scope>
</reference>
<gene>
    <name type="primary">Brca1</name>
</gene>
<feature type="chain" id="PRO_0000055832" description="Breast cancer type 1 susceptibility protein homolog">
    <location>
        <begin position="1"/>
        <end position="1812"/>
    </location>
</feature>
<feature type="domain" description="BRCT 1" evidence="3">
    <location>
        <begin position="1585"/>
        <end position="1679"/>
    </location>
</feature>
<feature type="domain" description="BRCT 2" evidence="3">
    <location>
        <begin position="1698"/>
        <end position="1797"/>
    </location>
</feature>
<feature type="zinc finger region" description="RING-type" evidence="4">
    <location>
        <begin position="24"/>
        <end position="65"/>
    </location>
</feature>
<feature type="region of interest" description="Disordered" evidence="5">
    <location>
        <begin position="165"/>
        <end position="198"/>
    </location>
</feature>
<feature type="region of interest" description="Disordered" evidence="5">
    <location>
        <begin position="321"/>
        <end position="362"/>
    </location>
</feature>
<feature type="region of interest" description="Disordered" evidence="5">
    <location>
        <begin position="492"/>
        <end position="581"/>
    </location>
</feature>
<feature type="region of interest" description="Disordered" evidence="5">
    <location>
        <begin position="640"/>
        <end position="767"/>
    </location>
</feature>
<feature type="region of interest" description="Disordered" evidence="5">
    <location>
        <begin position="864"/>
        <end position="899"/>
    </location>
</feature>
<feature type="region of interest" description="Disordered" evidence="5">
    <location>
        <begin position="947"/>
        <end position="995"/>
    </location>
</feature>
<feature type="region of interest" description="Disordered" evidence="5">
    <location>
        <begin position="1030"/>
        <end position="1056"/>
    </location>
</feature>
<feature type="region of interest" description="Disordered" evidence="5">
    <location>
        <begin position="1147"/>
        <end position="1185"/>
    </location>
</feature>
<feature type="region of interest" description="Disordered" evidence="5">
    <location>
        <begin position="1205"/>
        <end position="1230"/>
    </location>
</feature>
<feature type="region of interest" description="Disordered" evidence="5">
    <location>
        <begin position="1244"/>
        <end position="1289"/>
    </location>
</feature>
<feature type="region of interest" description="Disordered" evidence="5">
    <location>
        <begin position="1313"/>
        <end position="1343"/>
    </location>
</feature>
<feature type="region of interest" description="Interaction with PALB2" evidence="1">
    <location>
        <begin position="1353"/>
        <end position="1380"/>
    </location>
</feature>
<feature type="region of interest" description="Disordered" evidence="5">
    <location>
        <begin position="1437"/>
        <end position="1547"/>
    </location>
</feature>
<feature type="compositionally biased region" description="Basic residues" evidence="5">
    <location>
        <begin position="165"/>
        <end position="176"/>
    </location>
</feature>
<feature type="compositionally biased region" description="Polar residues" evidence="5">
    <location>
        <begin position="321"/>
        <end position="332"/>
    </location>
</feature>
<feature type="compositionally biased region" description="Polar residues" evidence="5">
    <location>
        <begin position="352"/>
        <end position="362"/>
    </location>
</feature>
<feature type="compositionally biased region" description="Polar residues" evidence="5">
    <location>
        <begin position="538"/>
        <end position="556"/>
    </location>
</feature>
<feature type="compositionally biased region" description="Basic and acidic residues" evidence="5">
    <location>
        <begin position="557"/>
        <end position="572"/>
    </location>
</feature>
<feature type="compositionally biased region" description="Basic and acidic residues" evidence="5">
    <location>
        <begin position="669"/>
        <end position="679"/>
    </location>
</feature>
<feature type="compositionally biased region" description="Polar residues" evidence="5">
    <location>
        <begin position="702"/>
        <end position="733"/>
    </location>
</feature>
<feature type="compositionally biased region" description="Polar residues" evidence="5">
    <location>
        <begin position="758"/>
        <end position="767"/>
    </location>
</feature>
<feature type="compositionally biased region" description="Polar residues" evidence="5">
    <location>
        <begin position="947"/>
        <end position="972"/>
    </location>
</feature>
<feature type="compositionally biased region" description="Basic and acidic residues" evidence="5">
    <location>
        <begin position="973"/>
        <end position="991"/>
    </location>
</feature>
<feature type="compositionally biased region" description="Polar residues" evidence="5">
    <location>
        <begin position="1151"/>
        <end position="1166"/>
    </location>
</feature>
<feature type="compositionally biased region" description="Acidic residues" evidence="5">
    <location>
        <begin position="1175"/>
        <end position="1185"/>
    </location>
</feature>
<feature type="compositionally biased region" description="Polar residues" evidence="5">
    <location>
        <begin position="1255"/>
        <end position="1279"/>
    </location>
</feature>
<feature type="compositionally biased region" description="Acidic residues" evidence="5">
    <location>
        <begin position="1313"/>
        <end position="1323"/>
    </location>
</feature>
<feature type="compositionally biased region" description="Polar residues" evidence="5">
    <location>
        <begin position="1333"/>
        <end position="1343"/>
    </location>
</feature>
<feature type="compositionally biased region" description="Polar residues" evidence="5">
    <location>
        <begin position="1492"/>
        <end position="1504"/>
    </location>
</feature>
<feature type="compositionally biased region" description="Basic and acidic residues" evidence="5">
    <location>
        <begin position="1527"/>
        <end position="1538"/>
    </location>
</feature>
<feature type="modified residue" description="N-acetylmethionine" evidence="2">
    <location>
        <position position="1"/>
    </location>
</feature>
<feature type="modified residue" description="Phosphoserine" evidence="2">
    <location>
        <position position="114"/>
    </location>
</feature>
<feature type="modified residue" description="Phosphoserine" evidence="2">
    <location>
        <position position="392"/>
    </location>
</feature>
<feature type="modified residue" description="Phosphoserine" evidence="2">
    <location>
        <position position="686"/>
    </location>
</feature>
<feature type="modified residue" description="Phosphoserine" evidence="11">
    <location>
        <position position="706"/>
    </location>
</feature>
<feature type="modified residue" description="Phosphoserine" evidence="11">
    <location>
        <position position="717"/>
    </location>
</feature>
<feature type="modified residue" description="Phosphoserine" evidence="10">
    <location>
        <position position="831"/>
    </location>
</feature>
<feature type="modified residue" description="Phosphoserine; by CHEK2" evidence="2">
    <location>
        <position position="971"/>
    </location>
</feature>
<feature type="modified residue" description="Phosphoserine" evidence="2">
    <location>
        <position position="992"/>
    </location>
</feature>
<feature type="modified residue" description="Phosphoserine" evidence="2">
    <location>
        <position position="1152"/>
    </location>
</feature>
<feature type="modified residue" description="Phosphoserine" evidence="2">
    <location>
        <position position="1154"/>
    </location>
</feature>
<feature type="modified residue" description="Phosphoserine" evidence="2">
    <location>
        <position position="1174"/>
    </location>
</feature>
<feature type="modified residue" description="Phosphoserine" evidence="2">
    <location>
        <position position="1180"/>
    </location>
</feature>
<feature type="modified residue" description="Phosphoserine" evidence="2">
    <location>
        <position position="1241"/>
    </location>
</feature>
<feature type="modified residue" description="Phosphoserine" evidence="2">
    <location>
        <position position="1297"/>
    </location>
</feature>
<feature type="modified residue" description="Phosphoserine" evidence="2">
    <location>
        <position position="1303"/>
    </location>
</feature>
<feature type="modified residue" description="Phosphoserine" evidence="2">
    <location>
        <position position="1343"/>
    </location>
</feature>
<feature type="modified residue" description="Phosphothreonine" evidence="2">
    <location>
        <position position="1350"/>
    </location>
</feature>
<feature type="modified residue" description="Phosphoserine" evidence="2">
    <location>
        <position position="1413"/>
    </location>
</feature>
<feature type="modified residue" description="Phosphoserine" evidence="2">
    <location>
        <position position="1481"/>
    </location>
</feature>
<feature type="modified residue" description="Phosphoserine" evidence="2">
    <location>
        <position position="1495"/>
    </location>
</feature>
<feature type="cross-link" description="Glycyl lysine isopeptide (Lys-Gly) (interchain with G-Cter in SUMO2)" evidence="2">
    <location>
        <position position="109"/>
    </location>
</feature>
<feature type="cross-link" description="Glycyl lysine isopeptide (Lys-Gly) (interchain with G-Cter in SUMO2)" evidence="2">
    <location>
        <position position="298"/>
    </location>
</feature>
<feature type="cross-link" description="Glycyl lysine isopeptide (Lys-Gly) (interchain with G-Cter in SUMO2)" evidence="2">
    <location>
        <position position="336"/>
    </location>
</feature>
<feature type="cross-link" description="Glycyl lysine isopeptide (Lys-Gly) (interchain with G-Cter in SUMO2)" evidence="2">
    <location>
        <position position="440"/>
    </location>
</feature>
<feature type="cross-link" description="Glycyl lysine isopeptide (Lys-Gly) (interchain with G-Cter in SUMO2)" evidence="2">
    <location>
        <position position="456"/>
    </location>
</feature>
<feature type="cross-link" description="Glycyl lysine isopeptide (Lys-Gly) (interchain with G-Cter in SUMO2)" evidence="2">
    <location>
        <position position="512"/>
    </location>
</feature>
<feature type="cross-link" description="Glycyl lysine isopeptide (Lys-Gly) (interchain with G-Cter in SUMO2)" evidence="2">
    <location>
        <position position="1048"/>
    </location>
</feature>
<feature type="sequence conflict" description="In Ref. 3; AAA96393." evidence="9" ref="3">
    <original>F</original>
    <variation>L</variation>
    <location>
        <position position="93"/>
    </location>
</feature>
<feature type="sequence conflict" description="In Ref. 2; AAB17113." evidence="9" ref="2">
    <original>S</original>
    <variation>T</variation>
    <location>
        <position position="305"/>
    </location>
</feature>
<feature type="sequence conflict" description="In Ref. 2; AAB17113." evidence="9" ref="2">
    <original>A</original>
    <variation>P</variation>
    <location>
        <position position="319"/>
    </location>
</feature>
<feature type="sequence conflict" description="In Ref. 3; AAA96393." evidence="9" ref="3">
    <original>Q</original>
    <variation>E</variation>
    <location>
        <position position="377"/>
    </location>
</feature>
<feature type="sequence conflict" description="In Ref. 3; AAA96393." evidence="9" ref="3">
    <original>K</original>
    <variation>Q</variation>
    <location>
        <position position="550"/>
    </location>
</feature>
<feature type="sequence conflict" description="In Ref. 2; AAB17113." evidence="9" ref="2">
    <original>P</original>
    <variation>A</variation>
    <location>
        <position position="652"/>
    </location>
</feature>
<feature type="sequence conflict" description="In Ref. 3; AAA96393 and 4; AAC52323." evidence="9" ref="3 4">
    <original>S</original>
    <variation>P</variation>
    <location>
        <position position="765"/>
    </location>
</feature>
<feature type="sequence conflict" description="In Ref. 3; AAA96393." evidence="9" ref="3">
    <original>P</original>
    <variation>L</variation>
    <location>
        <position position="917"/>
    </location>
</feature>
<feature type="sequence conflict" description="In Ref. 3; AAA96393 and 7; AAA99742." evidence="9" ref="3 7">
    <original>C</original>
    <variation>S</variation>
    <location>
        <position position="933"/>
    </location>
</feature>
<feature type="sequence conflict" description="In Ref. 1; AAB17114." evidence="9" ref="1">
    <original>C</original>
    <variation>R</variation>
    <location>
        <position position="1091"/>
    </location>
</feature>
<feature type="sequence conflict" description="In Ref. 2; AAB17113." evidence="9" ref="2">
    <original>I</original>
    <variation>K</variation>
    <location>
        <position position="1122"/>
    </location>
</feature>
<feature type="sequence conflict" description="In Ref. 3; AAA96393." evidence="9" ref="3">
    <original>S</original>
    <variation>R</variation>
    <location>
        <position position="1206"/>
    </location>
</feature>
<feature type="sequence conflict" description="In Ref. 3; AAA96393." evidence="9" ref="3">
    <original>RM</original>
    <variation>GI</variation>
    <location>
        <begin position="1212"/>
        <end position="1213"/>
    </location>
</feature>
<feature type="sequence conflict" description="In Ref. 3; AAA96393." evidence="9" ref="3">
    <original>S</original>
    <variation>R</variation>
    <location>
        <position position="1255"/>
    </location>
</feature>
<feature type="sequence conflict" description="In Ref. 3; AAA96393." evidence="9" ref="3">
    <original>H</original>
    <variation>N</variation>
    <location>
        <position position="1261"/>
    </location>
</feature>
<feature type="sequence conflict" description="In Ref. 2; AAB17113." evidence="9" ref="2">
    <original>A</original>
    <variation>V</variation>
    <location>
        <position position="1264"/>
    </location>
</feature>
<feature type="sequence conflict" description="In Ref. 2; AAB17113." evidence="9" ref="2">
    <original>A</original>
    <variation>P</variation>
    <location>
        <position position="1269"/>
    </location>
</feature>
<feature type="sequence conflict" description="In Ref. 2; AAB17113." evidence="9" ref="2">
    <original>K</original>
    <variation>T</variation>
    <location>
        <position position="1283"/>
    </location>
</feature>
<feature type="sequence conflict" description="In Ref. 2; AAB17113." evidence="9" ref="2">
    <original>N</original>
    <variation>T</variation>
    <location>
        <position position="1337"/>
    </location>
</feature>
<feature type="sequence conflict" description="In Ref. 2; AAB17113." evidence="9" ref="2">
    <original>T</original>
    <variation>P</variation>
    <location>
        <position position="1349"/>
    </location>
</feature>
<feature type="sequence conflict" description="In Ref. 2; AAB17113." evidence="9" ref="2">
    <original>QR</original>
    <variation>EG</variation>
    <location>
        <begin position="1352"/>
        <end position="1353"/>
    </location>
</feature>
<feature type="sequence conflict" description="In Ref. 2; AAB17113." evidence="9" ref="2">
    <original>P</original>
    <variation>S</variation>
    <location>
        <position position="1381"/>
    </location>
</feature>
<feature type="sequence conflict" description="In Ref. 2; AAB17113." evidence="9" ref="2">
    <original>A</original>
    <variation>G</variation>
    <location>
        <position position="1390"/>
    </location>
</feature>
<feature type="sequence conflict" description="In Ref. 2; AAB17113." evidence="9" ref="2">
    <original>D</original>
    <variation>V</variation>
    <location>
        <position position="1400"/>
    </location>
</feature>
<feature type="sequence conflict" description="In Ref. 2; AAB17113." evidence="9" ref="2">
    <original>Q</original>
    <variation>E</variation>
    <location>
        <position position="1503"/>
    </location>
</feature>
<feature type="sequence conflict" description="In Ref. 2; AAB17113." evidence="9" ref="2">
    <original>A</original>
    <variation>V</variation>
    <location>
        <position position="1549"/>
    </location>
</feature>
<feature type="sequence conflict" description="In Ref. 2; AAB17113." evidence="9" ref="2">
    <original>K</original>
    <variation>T</variation>
    <location>
        <position position="1680"/>
    </location>
</feature>
<feature type="sequence conflict" description="In Ref. 2; AAB17113." evidence="9" ref="2">
    <original>E</original>
    <variation>D</variation>
    <location>
        <position position="1712"/>
    </location>
</feature>
<feature type="sequence conflict" description="In Ref. 2; AAB17113." evidence="9" ref="2">
    <original>E</original>
    <variation>D</variation>
    <location>
        <position position="1721"/>
    </location>
</feature>
<feature type="sequence conflict" description="In Ref. 1; AAB17114." evidence="9" ref="1">
    <original>D</original>
    <variation>G</variation>
    <location>
        <position position="1791"/>
    </location>
</feature>
<feature type="strand" evidence="12">
    <location>
        <begin position="1346"/>
        <end position="1348"/>
    </location>
</feature>
<feature type="helix" evidence="12">
    <location>
        <begin position="1350"/>
        <end position="1377"/>
    </location>
</feature>
<feature type="turn" evidence="12">
    <location>
        <begin position="1378"/>
        <end position="1382"/>
    </location>
</feature>